<sequence length="728" mass="79730">MDNPTDTAGKCPVAHGNKPRGPSNRDWWPNQLNVQILHHNSGRADPMGKDFDYAEEFKKLDLDALKKDLTALMTDSQDWWPADFGHYGGLFIRMAWHSAGTYRITDGRGGAGQGQQRFAPLNSWPDNANLDKARRLLWPIKQKYGNRISWADLLILTGNVALESMGFKTFGFAGGRADVWEPEELYWGPEGTWLGDERYSGERQLAEPLGAVQMGLIYVNPEGPGGNPDPLASARDIRETFARMAMNDEETVALIAGGHTFGKTHGAGDPSFIGAEPEGGAIEDQGLGWKSSFGSGVGKDAITAGLEVTWSQTPTKWSNYFFENLFAYEWELTKSPAGAHQWQAKNAEASIPDAYEAGKKHLPTMLTSDLALRFDPIYEKISRRFLENPDQFADAFARAWFKLTHRDMGPKVRYLGPEVPAEDLIWQDVIPAVDHPLVGDKDIAELKAKVLATGLSVQELVSTAWASASTFRGSDKRGGANGARIRLAPQKDWDANQPAQLAKVLGVLEGLQKDFNAAQTGGKKISLADMIVLAGAAGVEKAAAAGGTTVSVPFTPGRMDASEAQTDAHSFAALEPRIDGFRNYVNDKRLQFMKPEEALVDRAQLLTLTGPEMTVLVGGLRVLKAGQPEHGVFTARPETLTNDFFVNLLDMATQWVPAAGKDGVYEGRDRKTGAAKWTGTRVDLIFGSHSQLRAFAEVYGQADAKEKFVKDFVAAWNKVMNADRFDLV</sequence>
<evidence type="ECO:0000255" key="1">
    <source>
        <dbReference type="HAMAP-Rule" id="MF_01961"/>
    </source>
</evidence>
<evidence type="ECO:0000256" key="2">
    <source>
        <dbReference type="SAM" id="MobiDB-lite"/>
    </source>
</evidence>
<evidence type="ECO:0000305" key="3"/>
<reference key="1">
    <citation type="journal article" date="2010" name="Appl. Environ. Microbiol.">
        <title>Conserved symbiotic plasmid DNA sequences in the multireplicon pangenomic structure of Rhizobium etli.</title>
        <authorList>
            <person name="Gonzalez V."/>
            <person name="Acosta J.L."/>
            <person name="Santamaria R.I."/>
            <person name="Bustos P."/>
            <person name="Fernandez J.L."/>
            <person name="Hernandez Gonzalez I.L."/>
            <person name="Diaz R."/>
            <person name="Flores M."/>
            <person name="Palacios R."/>
            <person name="Mora J."/>
            <person name="Davila G."/>
        </authorList>
    </citation>
    <scope>NUCLEOTIDE SEQUENCE [LARGE SCALE GENOMIC DNA]</scope>
    <source>
        <strain>CIAT 652</strain>
    </source>
</reference>
<comment type="function">
    <text evidence="1">Bifunctional enzyme with both catalase and broad-spectrum peroxidase activity.</text>
</comment>
<comment type="catalytic activity">
    <reaction evidence="1">
        <text>H2O2 + AH2 = A + 2 H2O</text>
        <dbReference type="Rhea" id="RHEA:30275"/>
        <dbReference type="ChEBI" id="CHEBI:13193"/>
        <dbReference type="ChEBI" id="CHEBI:15377"/>
        <dbReference type="ChEBI" id="CHEBI:16240"/>
        <dbReference type="ChEBI" id="CHEBI:17499"/>
        <dbReference type="EC" id="1.11.1.21"/>
    </reaction>
</comment>
<comment type="catalytic activity">
    <reaction evidence="1">
        <text>2 H2O2 = O2 + 2 H2O</text>
        <dbReference type="Rhea" id="RHEA:20309"/>
        <dbReference type="ChEBI" id="CHEBI:15377"/>
        <dbReference type="ChEBI" id="CHEBI:15379"/>
        <dbReference type="ChEBI" id="CHEBI:16240"/>
        <dbReference type="EC" id="1.11.1.21"/>
    </reaction>
</comment>
<comment type="cofactor">
    <cofactor evidence="1">
        <name>heme b</name>
        <dbReference type="ChEBI" id="CHEBI:60344"/>
    </cofactor>
    <text evidence="1">Binds 1 heme b (iron(II)-protoporphyrin IX) group per dimer.</text>
</comment>
<comment type="subunit">
    <text evidence="1">Homodimer or homotetramer.</text>
</comment>
<comment type="PTM">
    <text evidence="1">Formation of the three residue Trp-Tyr-Met cross-link is important for the catalase, but not the peroxidase activity of the enzyme.</text>
</comment>
<comment type="similarity">
    <text evidence="1">Belongs to the peroxidase family. Peroxidase/catalase subfamily.</text>
</comment>
<comment type="sequence caution" evidence="3">
    <conflict type="erroneous initiation">
        <sequence resource="EMBL-CDS" id="ACE94090"/>
    </conflict>
</comment>
<keyword id="KW-0349">Heme</keyword>
<keyword id="KW-0376">Hydrogen peroxide</keyword>
<keyword id="KW-0408">Iron</keyword>
<keyword id="KW-0479">Metal-binding</keyword>
<keyword id="KW-0560">Oxidoreductase</keyword>
<keyword id="KW-0575">Peroxidase</keyword>
<keyword id="KW-0614">Plasmid</keyword>
<protein>
    <recommendedName>
        <fullName evidence="1">Catalase-peroxidase</fullName>
        <shortName evidence="1">CP</shortName>
        <ecNumber evidence="1">1.11.1.21</ecNumber>
    </recommendedName>
    <alternativeName>
        <fullName evidence="1">Peroxidase/catalase</fullName>
    </alternativeName>
</protein>
<name>KATG_RHIE6</name>
<feature type="chain" id="PRO_0000354883" description="Catalase-peroxidase">
    <location>
        <begin position="1"/>
        <end position="728"/>
    </location>
</feature>
<feature type="region of interest" description="Disordered" evidence="2">
    <location>
        <begin position="1"/>
        <end position="26"/>
    </location>
</feature>
<feature type="active site" description="Proton acceptor" evidence="1">
    <location>
        <position position="97"/>
    </location>
</feature>
<feature type="binding site" description="axial binding residue" evidence="1">
    <location>
        <position position="259"/>
    </location>
    <ligand>
        <name>heme b</name>
        <dbReference type="ChEBI" id="CHEBI:60344"/>
    </ligand>
    <ligandPart>
        <name>Fe</name>
        <dbReference type="ChEBI" id="CHEBI:18248"/>
    </ligandPart>
</feature>
<feature type="site" description="Transition state stabilizer" evidence="1">
    <location>
        <position position="93"/>
    </location>
</feature>
<feature type="cross-link" description="Tryptophyl-tyrosyl-methioninium (Trp-Tyr) (with M-244)" evidence="1">
    <location>
        <begin position="96"/>
        <end position="218"/>
    </location>
</feature>
<feature type="cross-link" description="Tryptophyl-tyrosyl-methioninium (Tyr-Met) (with W-96)" evidence="1">
    <location>
        <begin position="218"/>
        <end position="244"/>
    </location>
</feature>
<gene>
    <name evidence="1" type="primary">katG</name>
    <name type="ordered locus">RHECIAT_PC0000007</name>
</gene>
<organism>
    <name type="scientific">Rhizobium etli (strain CIAT 652)</name>
    <dbReference type="NCBI Taxonomy" id="491916"/>
    <lineage>
        <taxon>Bacteria</taxon>
        <taxon>Pseudomonadati</taxon>
        <taxon>Pseudomonadota</taxon>
        <taxon>Alphaproteobacteria</taxon>
        <taxon>Hyphomicrobiales</taxon>
        <taxon>Rhizobiaceae</taxon>
        <taxon>Rhizobium/Agrobacterium group</taxon>
        <taxon>Rhizobium</taxon>
    </lineage>
</organism>
<accession>B3Q4F9</accession>
<dbReference type="EC" id="1.11.1.21" evidence="1"/>
<dbReference type="EMBL" id="CP001077">
    <property type="protein sequence ID" value="ACE94090.1"/>
    <property type="status" value="ALT_INIT"/>
    <property type="molecule type" value="Genomic_DNA"/>
</dbReference>
<dbReference type="SMR" id="B3Q4F9"/>
<dbReference type="KEGG" id="rec:RHECIAT_PC0000007"/>
<dbReference type="eggNOG" id="COG0376">
    <property type="taxonomic scope" value="Bacteria"/>
</dbReference>
<dbReference type="HOGENOM" id="CLU_025424_2_0_5"/>
<dbReference type="Proteomes" id="UP000008817">
    <property type="component" value="Plasmid pC"/>
</dbReference>
<dbReference type="GO" id="GO:0005829">
    <property type="term" value="C:cytosol"/>
    <property type="evidence" value="ECO:0007669"/>
    <property type="project" value="TreeGrafter"/>
</dbReference>
<dbReference type="GO" id="GO:0004096">
    <property type="term" value="F:catalase activity"/>
    <property type="evidence" value="ECO:0007669"/>
    <property type="project" value="UniProtKB-UniRule"/>
</dbReference>
<dbReference type="GO" id="GO:0020037">
    <property type="term" value="F:heme binding"/>
    <property type="evidence" value="ECO:0007669"/>
    <property type="project" value="InterPro"/>
</dbReference>
<dbReference type="GO" id="GO:0046872">
    <property type="term" value="F:metal ion binding"/>
    <property type="evidence" value="ECO:0007669"/>
    <property type="project" value="UniProtKB-KW"/>
</dbReference>
<dbReference type="GO" id="GO:0070301">
    <property type="term" value="P:cellular response to hydrogen peroxide"/>
    <property type="evidence" value="ECO:0007669"/>
    <property type="project" value="TreeGrafter"/>
</dbReference>
<dbReference type="GO" id="GO:0042744">
    <property type="term" value="P:hydrogen peroxide catabolic process"/>
    <property type="evidence" value="ECO:0007669"/>
    <property type="project" value="UniProtKB-KW"/>
</dbReference>
<dbReference type="CDD" id="cd00649">
    <property type="entry name" value="catalase_peroxidase_1"/>
    <property type="match status" value="1"/>
</dbReference>
<dbReference type="CDD" id="cd08200">
    <property type="entry name" value="catalase_peroxidase_2"/>
    <property type="match status" value="1"/>
</dbReference>
<dbReference type="FunFam" id="1.10.420.10:FF:000002">
    <property type="entry name" value="Catalase-peroxidase"/>
    <property type="match status" value="1"/>
</dbReference>
<dbReference type="FunFam" id="1.10.420.10:FF:000004">
    <property type="entry name" value="Catalase-peroxidase"/>
    <property type="match status" value="1"/>
</dbReference>
<dbReference type="FunFam" id="1.10.520.10:FF:000002">
    <property type="entry name" value="Catalase-peroxidase"/>
    <property type="match status" value="1"/>
</dbReference>
<dbReference type="Gene3D" id="1.10.520.10">
    <property type="match status" value="2"/>
</dbReference>
<dbReference type="Gene3D" id="1.10.420.10">
    <property type="entry name" value="Peroxidase, domain 2"/>
    <property type="match status" value="2"/>
</dbReference>
<dbReference type="HAMAP" id="MF_01961">
    <property type="entry name" value="Catal_peroxid"/>
    <property type="match status" value="1"/>
</dbReference>
<dbReference type="InterPro" id="IPR000763">
    <property type="entry name" value="Catalase_peroxidase"/>
</dbReference>
<dbReference type="InterPro" id="IPR002016">
    <property type="entry name" value="Haem_peroxidase"/>
</dbReference>
<dbReference type="InterPro" id="IPR010255">
    <property type="entry name" value="Haem_peroxidase_sf"/>
</dbReference>
<dbReference type="InterPro" id="IPR019794">
    <property type="entry name" value="Peroxidases_AS"/>
</dbReference>
<dbReference type="InterPro" id="IPR019793">
    <property type="entry name" value="Peroxidases_heam-ligand_BS"/>
</dbReference>
<dbReference type="NCBIfam" id="TIGR00198">
    <property type="entry name" value="cat_per_HPI"/>
    <property type="match status" value="1"/>
</dbReference>
<dbReference type="NCBIfam" id="NF011635">
    <property type="entry name" value="PRK15061.1"/>
    <property type="match status" value="1"/>
</dbReference>
<dbReference type="PANTHER" id="PTHR30555:SF0">
    <property type="entry name" value="CATALASE-PEROXIDASE"/>
    <property type="match status" value="1"/>
</dbReference>
<dbReference type="PANTHER" id="PTHR30555">
    <property type="entry name" value="HYDROPEROXIDASE I, BIFUNCTIONAL CATALASE-PEROXIDASE"/>
    <property type="match status" value="1"/>
</dbReference>
<dbReference type="Pfam" id="PF00141">
    <property type="entry name" value="peroxidase"/>
    <property type="match status" value="2"/>
</dbReference>
<dbReference type="PRINTS" id="PR00460">
    <property type="entry name" value="BPEROXIDASE"/>
</dbReference>
<dbReference type="PRINTS" id="PR00458">
    <property type="entry name" value="PEROXIDASE"/>
</dbReference>
<dbReference type="SUPFAM" id="SSF48113">
    <property type="entry name" value="Heme-dependent peroxidases"/>
    <property type="match status" value="2"/>
</dbReference>
<dbReference type="PROSITE" id="PS00435">
    <property type="entry name" value="PEROXIDASE_1"/>
    <property type="match status" value="1"/>
</dbReference>
<dbReference type="PROSITE" id="PS00436">
    <property type="entry name" value="PEROXIDASE_2"/>
    <property type="match status" value="1"/>
</dbReference>
<dbReference type="PROSITE" id="PS50873">
    <property type="entry name" value="PEROXIDASE_4"/>
    <property type="match status" value="1"/>
</dbReference>
<proteinExistence type="inferred from homology"/>
<geneLocation type="plasmid">
    <name>pC</name>
</geneLocation>